<protein>
    <recommendedName>
        <fullName evidence="1">Histidinol dehydrogenase</fullName>
        <shortName evidence="1">HDH</shortName>
        <ecNumber evidence="1">1.1.1.23</ecNumber>
    </recommendedName>
</protein>
<dbReference type="EC" id="1.1.1.23" evidence="1"/>
<dbReference type="EMBL" id="CR522870">
    <property type="protein sequence ID" value="CAG36011.1"/>
    <property type="molecule type" value="Genomic_DNA"/>
</dbReference>
<dbReference type="RefSeq" id="WP_011188523.1">
    <property type="nucleotide sequence ID" value="NC_006138.1"/>
</dbReference>
<dbReference type="SMR" id="Q6ANR3"/>
<dbReference type="STRING" id="177439.DP1282"/>
<dbReference type="KEGG" id="dps:DP1282"/>
<dbReference type="eggNOG" id="COG0141">
    <property type="taxonomic scope" value="Bacteria"/>
</dbReference>
<dbReference type="HOGENOM" id="CLU_006732_3_3_7"/>
<dbReference type="OrthoDB" id="9805269at2"/>
<dbReference type="UniPathway" id="UPA00031">
    <property type="reaction ID" value="UER00014"/>
</dbReference>
<dbReference type="Proteomes" id="UP000000602">
    <property type="component" value="Chromosome"/>
</dbReference>
<dbReference type="GO" id="GO:0005829">
    <property type="term" value="C:cytosol"/>
    <property type="evidence" value="ECO:0007669"/>
    <property type="project" value="TreeGrafter"/>
</dbReference>
<dbReference type="GO" id="GO:0004399">
    <property type="term" value="F:histidinol dehydrogenase activity"/>
    <property type="evidence" value="ECO:0007669"/>
    <property type="project" value="UniProtKB-UniRule"/>
</dbReference>
<dbReference type="GO" id="GO:0051287">
    <property type="term" value="F:NAD binding"/>
    <property type="evidence" value="ECO:0007669"/>
    <property type="project" value="InterPro"/>
</dbReference>
<dbReference type="GO" id="GO:0008270">
    <property type="term" value="F:zinc ion binding"/>
    <property type="evidence" value="ECO:0007669"/>
    <property type="project" value="UniProtKB-UniRule"/>
</dbReference>
<dbReference type="GO" id="GO:0000105">
    <property type="term" value="P:L-histidine biosynthetic process"/>
    <property type="evidence" value="ECO:0007669"/>
    <property type="project" value="UniProtKB-UniRule"/>
</dbReference>
<dbReference type="CDD" id="cd06572">
    <property type="entry name" value="Histidinol_dh"/>
    <property type="match status" value="1"/>
</dbReference>
<dbReference type="FunFam" id="3.40.50.1980:FF:000001">
    <property type="entry name" value="Histidinol dehydrogenase"/>
    <property type="match status" value="1"/>
</dbReference>
<dbReference type="Gene3D" id="1.20.5.1300">
    <property type="match status" value="1"/>
</dbReference>
<dbReference type="Gene3D" id="3.40.50.1980">
    <property type="entry name" value="Nitrogenase molybdenum iron protein domain"/>
    <property type="match status" value="2"/>
</dbReference>
<dbReference type="HAMAP" id="MF_01024">
    <property type="entry name" value="HisD"/>
    <property type="match status" value="1"/>
</dbReference>
<dbReference type="InterPro" id="IPR016161">
    <property type="entry name" value="Ald_DH/histidinol_DH"/>
</dbReference>
<dbReference type="InterPro" id="IPR001692">
    <property type="entry name" value="Histidinol_DH_CS"/>
</dbReference>
<dbReference type="InterPro" id="IPR022695">
    <property type="entry name" value="Histidinol_DH_monofunct"/>
</dbReference>
<dbReference type="InterPro" id="IPR012131">
    <property type="entry name" value="Hstdl_DH"/>
</dbReference>
<dbReference type="NCBIfam" id="TIGR00069">
    <property type="entry name" value="hisD"/>
    <property type="match status" value="1"/>
</dbReference>
<dbReference type="PANTHER" id="PTHR21256:SF2">
    <property type="entry name" value="HISTIDINE BIOSYNTHESIS TRIFUNCTIONAL PROTEIN"/>
    <property type="match status" value="1"/>
</dbReference>
<dbReference type="PANTHER" id="PTHR21256">
    <property type="entry name" value="HISTIDINOL DEHYDROGENASE HDH"/>
    <property type="match status" value="1"/>
</dbReference>
<dbReference type="Pfam" id="PF00815">
    <property type="entry name" value="Histidinol_dh"/>
    <property type="match status" value="1"/>
</dbReference>
<dbReference type="PIRSF" id="PIRSF000099">
    <property type="entry name" value="Histidinol_dh"/>
    <property type="match status" value="1"/>
</dbReference>
<dbReference type="PRINTS" id="PR00083">
    <property type="entry name" value="HOLDHDRGNASE"/>
</dbReference>
<dbReference type="SUPFAM" id="SSF53720">
    <property type="entry name" value="ALDH-like"/>
    <property type="match status" value="1"/>
</dbReference>
<dbReference type="PROSITE" id="PS00611">
    <property type="entry name" value="HISOL_DEHYDROGENASE"/>
    <property type="match status" value="1"/>
</dbReference>
<gene>
    <name evidence="1" type="primary">hisD</name>
    <name type="ordered locus">DP1282</name>
</gene>
<reference key="1">
    <citation type="journal article" date="2004" name="Environ. Microbiol.">
        <title>The genome of Desulfotalea psychrophila, a sulfate-reducing bacterium from permanently cold Arctic sediments.</title>
        <authorList>
            <person name="Rabus R."/>
            <person name="Ruepp A."/>
            <person name="Frickey T."/>
            <person name="Rattei T."/>
            <person name="Fartmann B."/>
            <person name="Stark M."/>
            <person name="Bauer M."/>
            <person name="Zibat A."/>
            <person name="Lombardot T."/>
            <person name="Becker I."/>
            <person name="Amann J."/>
            <person name="Gellner K."/>
            <person name="Teeling H."/>
            <person name="Leuschner W.D."/>
            <person name="Gloeckner F.-O."/>
            <person name="Lupas A.N."/>
            <person name="Amann R."/>
            <person name="Klenk H.-P."/>
        </authorList>
    </citation>
    <scope>NUCLEOTIDE SEQUENCE [LARGE SCALE GENOMIC DNA]</scope>
    <source>
        <strain>DSM 12343 / LSv54</strain>
    </source>
</reference>
<name>HISX_DESPS</name>
<proteinExistence type="inferred from homology"/>
<sequence>MLIEPKMIGSSEGQALLESLLNRFQIGDSGCQSAVEDILTAVRQEGDAAVVKYCRRFDCPDMTASALAVTAAEIAAAYELVDAAFLETLAAAIERIHSFHEREMEDSWMQTREDGTIVGRLVRPVDSAGLYVPGGTGGSTPLVSSVLMNGIPAGIAGVTTRVMVTPPGKDGKISPHLLVAATEIGITEIYKAGSAWGIAALAYGTATIPRVDVIVGPGNQFVTEAKRLVSGMVRIDMIAGPSEVLIVADETADPVYIAADMLAQAEHDPQALSILLTTDRQVAEAVPAEIERQLKTLSRAEIAEKSIVDRAVILVVADIEEAIGLANDIAIEHLELMIVDPWAQVPHIRHAGAIFLGSHTPEAAGDYFAGPNHVLPTMGTARFASALGVETFLKKSSIISYSQTALQNDAEHIQRLANLEGLTAHANSVAVRVK</sequence>
<comment type="function">
    <text evidence="1">Catalyzes the sequential NAD-dependent oxidations of L-histidinol to L-histidinaldehyde and then to L-histidine.</text>
</comment>
<comment type="catalytic activity">
    <reaction evidence="1">
        <text>L-histidinol + 2 NAD(+) + H2O = L-histidine + 2 NADH + 3 H(+)</text>
        <dbReference type="Rhea" id="RHEA:20641"/>
        <dbReference type="ChEBI" id="CHEBI:15377"/>
        <dbReference type="ChEBI" id="CHEBI:15378"/>
        <dbReference type="ChEBI" id="CHEBI:57540"/>
        <dbReference type="ChEBI" id="CHEBI:57595"/>
        <dbReference type="ChEBI" id="CHEBI:57699"/>
        <dbReference type="ChEBI" id="CHEBI:57945"/>
        <dbReference type="EC" id="1.1.1.23"/>
    </reaction>
</comment>
<comment type="cofactor">
    <cofactor evidence="1">
        <name>Zn(2+)</name>
        <dbReference type="ChEBI" id="CHEBI:29105"/>
    </cofactor>
    <text evidence="1">Binds 1 zinc ion per subunit.</text>
</comment>
<comment type="pathway">
    <text evidence="1">Amino-acid biosynthesis; L-histidine biosynthesis; L-histidine from 5-phospho-alpha-D-ribose 1-diphosphate: step 9/9.</text>
</comment>
<comment type="similarity">
    <text evidence="1">Belongs to the histidinol dehydrogenase family.</text>
</comment>
<evidence type="ECO:0000255" key="1">
    <source>
        <dbReference type="HAMAP-Rule" id="MF_01024"/>
    </source>
</evidence>
<feature type="chain" id="PRO_0000135767" description="Histidinol dehydrogenase">
    <location>
        <begin position="1"/>
        <end position="434"/>
    </location>
</feature>
<feature type="active site" description="Proton acceptor" evidence="1">
    <location>
        <position position="332"/>
    </location>
</feature>
<feature type="active site" description="Proton acceptor" evidence="1">
    <location>
        <position position="333"/>
    </location>
</feature>
<feature type="binding site" evidence="1">
    <location>
        <position position="242"/>
    </location>
    <ligand>
        <name>substrate</name>
    </ligand>
</feature>
<feature type="binding site" evidence="1">
    <location>
        <position position="264"/>
    </location>
    <ligand>
        <name>substrate</name>
    </ligand>
</feature>
<feature type="binding site" evidence="1">
    <location>
        <position position="264"/>
    </location>
    <ligand>
        <name>Zn(2+)</name>
        <dbReference type="ChEBI" id="CHEBI:29105"/>
    </ligand>
</feature>
<feature type="binding site" evidence="1">
    <location>
        <position position="267"/>
    </location>
    <ligand>
        <name>substrate</name>
    </ligand>
</feature>
<feature type="binding site" evidence="1">
    <location>
        <position position="267"/>
    </location>
    <ligand>
        <name>Zn(2+)</name>
        <dbReference type="ChEBI" id="CHEBI:29105"/>
    </ligand>
</feature>
<feature type="binding site" evidence="1">
    <location>
        <position position="333"/>
    </location>
    <ligand>
        <name>substrate</name>
    </ligand>
</feature>
<feature type="binding site" evidence="1">
    <location>
        <position position="366"/>
    </location>
    <ligand>
        <name>substrate</name>
    </ligand>
</feature>
<feature type="binding site" evidence="1">
    <location>
        <position position="366"/>
    </location>
    <ligand>
        <name>Zn(2+)</name>
        <dbReference type="ChEBI" id="CHEBI:29105"/>
    </ligand>
</feature>
<feature type="binding site" evidence="1">
    <location>
        <position position="420"/>
    </location>
    <ligand>
        <name>substrate</name>
    </ligand>
</feature>
<feature type="binding site" evidence="1">
    <location>
        <position position="425"/>
    </location>
    <ligand>
        <name>substrate</name>
    </ligand>
</feature>
<feature type="binding site" evidence="1">
    <location>
        <position position="425"/>
    </location>
    <ligand>
        <name>Zn(2+)</name>
        <dbReference type="ChEBI" id="CHEBI:29105"/>
    </ligand>
</feature>
<organism>
    <name type="scientific">Desulfotalea psychrophila (strain LSv54 / DSM 12343)</name>
    <dbReference type="NCBI Taxonomy" id="177439"/>
    <lineage>
        <taxon>Bacteria</taxon>
        <taxon>Pseudomonadati</taxon>
        <taxon>Thermodesulfobacteriota</taxon>
        <taxon>Desulfobulbia</taxon>
        <taxon>Desulfobulbales</taxon>
        <taxon>Desulfocapsaceae</taxon>
        <taxon>Desulfotalea</taxon>
    </lineage>
</organism>
<keyword id="KW-0028">Amino-acid biosynthesis</keyword>
<keyword id="KW-0368">Histidine biosynthesis</keyword>
<keyword id="KW-0479">Metal-binding</keyword>
<keyword id="KW-0520">NAD</keyword>
<keyword id="KW-0560">Oxidoreductase</keyword>
<keyword id="KW-1185">Reference proteome</keyword>
<keyword id="KW-0862">Zinc</keyword>
<accession>Q6ANR3</accession>